<sequence length="167" mass="19252">MGITKEEVNSYYQKAGIVLTDEEVDQIQLMDYGLGKERKVGLQLFVYVNTDRYCSKELVLFPGQTCPEHRHPPVDGQEGKQETFRCRYGKVYLYVEGEKTPLPKVLPPQEDREHYTVWHEIELEPGGQYTIPPNTKHWFQAGEEGAVVTEMSSTSTDKHDIFTDPRI</sequence>
<evidence type="ECO:0000250" key="1">
    <source>
        <dbReference type="UniProtKB" id="A3E7Z6"/>
    </source>
</evidence>
<evidence type="ECO:0000269" key="2">
    <source>
    </source>
</evidence>
<evidence type="ECO:0000305" key="3"/>
<evidence type="ECO:0000305" key="4">
    <source>
    </source>
</evidence>
<evidence type="ECO:0007744" key="5">
    <source>
        <dbReference type="PDB" id="2Y0O"/>
    </source>
</evidence>
<evidence type="ECO:0007829" key="6">
    <source>
        <dbReference type="PDB" id="2Y0O"/>
    </source>
</evidence>
<feature type="chain" id="PRO_0000049486" description="Probable D-lyxose ketol-isomerase">
    <location>
        <begin position="1"/>
        <end position="167"/>
    </location>
</feature>
<feature type="binding site" evidence="4 5">
    <location>
        <position position="69"/>
    </location>
    <ligand>
        <name>Mn(2+)</name>
        <dbReference type="ChEBI" id="CHEBI:29035"/>
    </ligand>
</feature>
<feature type="binding site" evidence="4 5">
    <location>
        <position position="71"/>
    </location>
    <ligand>
        <name>Mn(2+)</name>
        <dbReference type="ChEBI" id="CHEBI:29035"/>
    </ligand>
</feature>
<feature type="binding site" evidence="4 5">
    <location>
        <position position="82"/>
    </location>
    <ligand>
        <name>Mn(2+)</name>
        <dbReference type="ChEBI" id="CHEBI:29035"/>
    </ligand>
</feature>
<feature type="binding site" evidence="4 5">
    <location>
        <position position="137"/>
    </location>
    <ligand>
        <name>Mn(2+)</name>
        <dbReference type="ChEBI" id="CHEBI:29035"/>
    </ligand>
</feature>
<feature type="helix" evidence="6">
    <location>
        <begin position="5"/>
        <end position="14"/>
    </location>
</feature>
<feature type="helix" evidence="6">
    <location>
        <begin position="21"/>
        <end position="24"/>
    </location>
</feature>
<feature type="strand" evidence="6">
    <location>
        <begin position="28"/>
        <end position="30"/>
    </location>
</feature>
<feature type="turn" evidence="6">
    <location>
        <begin position="37"/>
        <end position="39"/>
    </location>
</feature>
<feature type="strand" evidence="6">
    <location>
        <begin position="42"/>
        <end position="49"/>
    </location>
</feature>
<feature type="strand" evidence="6">
    <location>
        <begin position="51"/>
        <end position="60"/>
    </location>
</feature>
<feature type="strand" evidence="6">
    <location>
        <begin position="65"/>
        <end position="70"/>
    </location>
</feature>
<feature type="strand" evidence="6">
    <location>
        <begin position="82"/>
        <end position="98"/>
    </location>
</feature>
<feature type="helix" evidence="6">
    <location>
        <begin position="109"/>
        <end position="114"/>
    </location>
</feature>
<feature type="strand" evidence="6">
    <location>
        <begin position="119"/>
        <end position="123"/>
    </location>
</feature>
<feature type="strand" evidence="6">
    <location>
        <begin position="128"/>
        <end position="131"/>
    </location>
</feature>
<feature type="strand" evidence="6">
    <location>
        <begin position="137"/>
        <end position="153"/>
    </location>
</feature>
<feature type="helix" evidence="6">
    <location>
        <begin position="157"/>
        <end position="159"/>
    </location>
</feature>
<feature type="strand" evidence="6">
    <location>
        <begin position="161"/>
        <end position="164"/>
    </location>
</feature>
<organism>
    <name type="scientific">Bacillus subtilis (strain 168)</name>
    <dbReference type="NCBI Taxonomy" id="224308"/>
    <lineage>
        <taxon>Bacteria</taxon>
        <taxon>Bacillati</taxon>
        <taxon>Bacillota</taxon>
        <taxon>Bacilli</taxon>
        <taxon>Bacillales</taxon>
        <taxon>Bacillaceae</taxon>
        <taxon>Bacillus</taxon>
    </lineage>
</organism>
<comment type="function">
    <text evidence="1">Sugar isomerase that catalyzes the reversible isomerization of D-lyxose to D-xylulose.</text>
</comment>
<comment type="catalytic activity">
    <reaction evidence="1">
        <text>D-lyxose = D-xylulose</text>
        <dbReference type="Rhea" id="RHEA:14201"/>
        <dbReference type="ChEBI" id="CHEBI:16789"/>
        <dbReference type="ChEBI" id="CHEBI:17140"/>
        <dbReference type="EC" id="5.3.1.15"/>
    </reaction>
</comment>
<comment type="cofactor">
    <cofactor evidence="1">
        <name>Mn(2+)</name>
        <dbReference type="ChEBI" id="CHEBI:29035"/>
    </cofactor>
</comment>
<comment type="subunit">
    <text evidence="2">Homodimer.</text>
</comment>
<comment type="similarity">
    <text evidence="3">Belongs to the D-lyxose ketol-isomerase family.</text>
</comment>
<proteinExistence type="evidence at protein level"/>
<accession>P96578</accession>
<name>DLYKI_BACSU</name>
<protein>
    <recommendedName>
        <fullName evidence="1">Probable D-lyxose ketol-isomerase</fullName>
        <ecNumber evidence="1">5.3.1.15</ecNumber>
    </recommendedName>
    <alternativeName>
        <fullName evidence="1">D-lyxose isomerase</fullName>
    </alternativeName>
</protein>
<gene>
    <name type="primary">ydaE</name>
    <name type="ordered locus">BSU04200</name>
</gene>
<reference key="1">
    <citation type="submission" date="1997-03" db="EMBL/GenBank/DDBJ databases">
        <title>A 148 kbp sequence of the region between 35 and 47 degree of the Bacillus subtilis genome.</title>
        <authorList>
            <person name="Kasahara Y."/>
            <person name="Nakai S."/>
            <person name="Lee S."/>
            <person name="Sadaie Y."/>
            <person name="Ogasawara N."/>
        </authorList>
    </citation>
    <scope>NUCLEOTIDE SEQUENCE [GENOMIC DNA]</scope>
    <source>
        <strain>168</strain>
    </source>
</reference>
<reference key="2">
    <citation type="journal article" date="1997" name="Nature">
        <title>The complete genome sequence of the Gram-positive bacterium Bacillus subtilis.</title>
        <authorList>
            <person name="Kunst F."/>
            <person name="Ogasawara N."/>
            <person name="Moszer I."/>
            <person name="Albertini A.M."/>
            <person name="Alloni G."/>
            <person name="Azevedo V."/>
            <person name="Bertero M.G."/>
            <person name="Bessieres P."/>
            <person name="Bolotin A."/>
            <person name="Borchert S."/>
            <person name="Borriss R."/>
            <person name="Boursier L."/>
            <person name="Brans A."/>
            <person name="Braun M."/>
            <person name="Brignell S.C."/>
            <person name="Bron S."/>
            <person name="Brouillet S."/>
            <person name="Bruschi C.V."/>
            <person name="Caldwell B."/>
            <person name="Capuano V."/>
            <person name="Carter N.M."/>
            <person name="Choi S.-K."/>
            <person name="Codani J.-J."/>
            <person name="Connerton I.F."/>
            <person name="Cummings N.J."/>
            <person name="Daniel R.A."/>
            <person name="Denizot F."/>
            <person name="Devine K.M."/>
            <person name="Duesterhoeft A."/>
            <person name="Ehrlich S.D."/>
            <person name="Emmerson P.T."/>
            <person name="Entian K.-D."/>
            <person name="Errington J."/>
            <person name="Fabret C."/>
            <person name="Ferrari E."/>
            <person name="Foulger D."/>
            <person name="Fritz C."/>
            <person name="Fujita M."/>
            <person name="Fujita Y."/>
            <person name="Fuma S."/>
            <person name="Galizzi A."/>
            <person name="Galleron N."/>
            <person name="Ghim S.-Y."/>
            <person name="Glaser P."/>
            <person name="Goffeau A."/>
            <person name="Golightly E.J."/>
            <person name="Grandi G."/>
            <person name="Guiseppi G."/>
            <person name="Guy B.J."/>
            <person name="Haga K."/>
            <person name="Haiech J."/>
            <person name="Harwood C.R."/>
            <person name="Henaut A."/>
            <person name="Hilbert H."/>
            <person name="Holsappel S."/>
            <person name="Hosono S."/>
            <person name="Hullo M.-F."/>
            <person name="Itaya M."/>
            <person name="Jones L.-M."/>
            <person name="Joris B."/>
            <person name="Karamata D."/>
            <person name="Kasahara Y."/>
            <person name="Klaerr-Blanchard M."/>
            <person name="Klein C."/>
            <person name="Kobayashi Y."/>
            <person name="Koetter P."/>
            <person name="Koningstein G."/>
            <person name="Krogh S."/>
            <person name="Kumano M."/>
            <person name="Kurita K."/>
            <person name="Lapidus A."/>
            <person name="Lardinois S."/>
            <person name="Lauber J."/>
            <person name="Lazarevic V."/>
            <person name="Lee S.-M."/>
            <person name="Levine A."/>
            <person name="Liu H."/>
            <person name="Masuda S."/>
            <person name="Mauel C."/>
            <person name="Medigue C."/>
            <person name="Medina N."/>
            <person name="Mellado R.P."/>
            <person name="Mizuno M."/>
            <person name="Moestl D."/>
            <person name="Nakai S."/>
            <person name="Noback M."/>
            <person name="Noone D."/>
            <person name="O'Reilly M."/>
            <person name="Ogawa K."/>
            <person name="Ogiwara A."/>
            <person name="Oudega B."/>
            <person name="Park S.-H."/>
            <person name="Parro V."/>
            <person name="Pohl T.M."/>
            <person name="Portetelle D."/>
            <person name="Porwollik S."/>
            <person name="Prescott A.M."/>
            <person name="Presecan E."/>
            <person name="Pujic P."/>
            <person name="Purnelle B."/>
            <person name="Rapoport G."/>
            <person name="Rey M."/>
            <person name="Reynolds S."/>
            <person name="Rieger M."/>
            <person name="Rivolta C."/>
            <person name="Rocha E."/>
            <person name="Roche B."/>
            <person name="Rose M."/>
            <person name="Sadaie Y."/>
            <person name="Sato T."/>
            <person name="Scanlan E."/>
            <person name="Schleich S."/>
            <person name="Schroeter R."/>
            <person name="Scoffone F."/>
            <person name="Sekiguchi J."/>
            <person name="Sekowska A."/>
            <person name="Seror S.J."/>
            <person name="Serror P."/>
            <person name="Shin B.-S."/>
            <person name="Soldo B."/>
            <person name="Sorokin A."/>
            <person name="Tacconi E."/>
            <person name="Takagi T."/>
            <person name="Takahashi H."/>
            <person name="Takemaru K."/>
            <person name="Takeuchi M."/>
            <person name="Tamakoshi A."/>
            <person name="Tanaka T."/>
            <person name="Terpstra P."/>
            <person name="Tognoni A."/>
            <person name="Tosato V."/>
            <person name="Uchiyama S."/>
            <person name="Vandenbol M."/>
            <person name="Vannier F."/>
            <person name="Vassarotti A."/>
            <person name="Viari A."/>
            <person name="Wambutt R."/>
            <person name="Wedler E."/>
            <person name="Wedler H."/>
            <person name="Weitzenegger T."/>
            <person name="Winters P."/>
            <person name="Wipat A."/>
            <person name="Yamamoto H."/>
            <person name="Yamane K."/>
            <person name="Yasumoto K."/>
            <person name="Yata K."/>
            <person name="Yoshida K."/>
            <person name="Yoshikawa H.-F."/>
            <person name="Zumstein E."/>
            <person name="Yoshikawa H."/>
            <person name="Danchin A."/>
        </authorList>
    </citation>
    <scope>NUCLEOTIDE SEQUENCE [LARGE SCALE GENOMIC DNA]</scope>
    <source>
        <strain>168</strain>
    </source>
</reference>
<reference evidence="5" key="3">
    <citation type="journal article" date="2011" name="Proteins">
        <title>The structure of a D-lyxose isomerase from the sigmaB regulon of Bacillus subtilis.</title>
        <authorList>
            <person name="Marles-Wright J."/>
            <person name="Lewis R.J."/>
        </authorList>
    </citation>
    <scope>X-RAY CRYSTALLOGRAPHY (1.23 ANGSTROMS) IN COMPLEX WITH ZINC</scope>
    <scope>SUBUNIT</scope>
    <source>
        <strain>168</strain>
    </source>
</reference>
<keyword id="KW-0002">3D-structure</keyword>
<keyword id="KW-0119">Carbohydrate metabolism</keyword>
<keyword id="KW-0413">Isomerase</keyword>
<keyword id="KW-0464">Manganese</keyword>
<keyword id="KW-0479">Metal-binding</keyword>
<keyword id="KW-1185">Reference proteome</keyword>
<dbReference type="EC" id="5.3.1.15" evidence="1"/>
<dbReference type="EMBL" id="AB001488">
    <property type="protein sequence ID" value="BAA19258.1"/>
    <property type="molecule type" value="Genomic_DNA"/>
</dbReference>
<dbReference type="EMBL" id="AL009126">
    <property type="protein sequence ID" value="CAB12227.1"/>
    <property type="molecule type" value="Genomic_DNA"/>
</dbReference>
<dbReference type="PIR" id="E69768">
    <property type="entry name" value="E69768"/>
</dbReference>
<dbReference type="PDB" id="2Y0O">
    <property type="method" value="X-ray"/>
    <property type="resolution" value="1.23 A"/>
    <property type="chains" value="A=1-167"/>
</dbReference>
<dbReference type="PDBsum" id="2Y0O"/>
<dbReference type="SMR" id="P96578"/>
<dbReference type="FunCoup" id="P96578">
    <property type="interactions" value="48"/>
</dbReference>
<dbReference type="STRING" id="224308.BSU04200"/>
<dbReference type="PaxDb" id="224308-BSU04200"/>
<dbReference type="EnsemblBacteria" id="CAB12227">
    <property type="protein sequence ID" value="CAB12227"/>
    <property type="gene ID" value="BSU_04200"/>
</dbReference>
<dbReference type="GeneID" id="938182"/>
<dbReference type="KEGG" id="bsu:BSU04200"/>
<dbReference type="PATRIC" id="fig|224308.179.peg.446"/>
<dbReference type="eggNOG" id="COG1917">
    <property type="taxonomic scope" value="Bacteria"/>
</dbReference>
<dbReference type="InParanoid" id="P96578"/>
<dbReference type="OrthoDB" id="9781654at2"/>
<dbReference type="BioCyc" id="BSUB:BSU04200-MONOMER"/>
<dbReference type="BRENDA" id="5.3.1.15">
    <property type="organism ID" value="658"/>
</dbReference>
<dbReference type="EvolutionaryTrace" id="P96578"/>
<dbReference type="Proteomes" id="UP000001570">
    <property type="component" value="Chromosome"/>
</dbReference>
<dbReference type="GO" id="GO:0047828">
    <property type="term" value="F:D-lyxose ketol-isomerase activity"/>
    <property type="evidence" value="ECO:0007669"/>
    <property type="project" value="UniProtKB-EC"/>
</dbReference>
<dbReference type="GO" id="GO:0046872">
    <property type="term" value="F:metal ion binding"/>
    <property type="evidence" value="ECO:0007669"/>
    <property type="project" value="UniProtKB-KW"/>
</dbReference>
<dbReference type="CDD" id="cd20308">
    <property type="entry name" value="cupin_YdaE"/>
    <property type="match status" value="1"/>
</dbReference>
<dbReference type="Gene3D" id="2.60.120.10">
    <property type="entry name" value="Jelly Rolls"/>
    <property type="match status" value="1"/>
</dbReference>
<dbReference type="InterPro" id="IPR010864">
    <property type="entry name" value="D-lyxose_isomer"/>
</dbReference>
<dbReference type="InterPro" id="IPR014710">
    <property type="entry name" value="RmlC-like_jellyroll"/>
</dbReference>
<dbReference type="InterPro" id="IPR011051">
    <property type="entry name" value="RmlC_Cupin_sf"/>
</dbReference>
<dbReference type="Pfam" id="PF07385">
    <property type="entry name" value="Lyx_isomer"/>
    <property type="match status" value="1"/>
</dbReference>
<dbReference type="SUPFAM" id="SSF51182">
    <property type="entry name" value="RmlC-like cupins"/>
    <property type="match status" value="1"/>
</dbReference>